<proteinExistence type="evidence at transcript level"/>
<gene>
    <name type="primary">I</name>
    <name type="ORF">7b</name>
</gene>
<organismHost>
    <name type="scientific">Mus musculus</name>
    <name type="common">Mouse</name>
    <dbReference type="NCBI Taxonomy" id="10090"/>
</organismHost>
<name>IORF_CVMJH</name>
<dbReference type="EMBL" id="X00990">
    <property type="status" value="NOT_ANNOTATED_CDS"/>
    <property type="molecule type" value="mRNA"/>
</dbReference>
<dbReference type="Proteomes" id="UP000007193">
    <property type="component" value="Genome"/>
</dbReference>
<dbReference type="GO" id="GO:0044423">
    <property type="term" value="C:virion component"/>
    <property type="evidence" value="ECO:0007669"/>
    <property type="project" value="UniProtKB-KW"/>
</dbReference>
<dbReference type="CDD" id="cd21662">
    <property type="entry name" value="embe-CoV_Protein-I_like"/>
    <property type="match status" value="1"/>
</dbReference>
<dbReference type="InterPro" id="IPR004876">
    <property type="entry name" value="Corona_nucI"/>
</dbReference>
<dbReference type="InterPro" id="IPR044311">
    <property type="entry name" value="N2-like_embe-CoV"/>
</dbReference>
<dbReference type="Pfam" id="PF03187">
    <property type="entry name" value="Corona_I"/>
    <property type="match status" value="1"/>
</dbReference>
<feature type="chain" id="PRO_0000296312" description="Protein I">
    <location>
        <begin position="1"/>
        <end position="207"/>
    </location>
</feature>
<accession>P0C5A5</accession>
<reference key="1">
    <citation type="journal article" date="1983" name="Nucleic Acids Res.">
        <title>Coronavirus JHM: nucleotide sequence of the mRNA that encodes nucleocapsid protein.</title>
        <authorList>
            <person name="Skinner M.A."/>
            <person name="Siddell S.G."/>
        </authorList>
    </citation>
    <scope>NUCLEOTIDE SEQUENCE [MRNA]</scope>
</reference>
<keyword id="KW-0946">Virion</keyword>
<comment type="function">
    <text evidence="1">Structural protein that is not essential for the viral replication either in tissue culture or in its natural host.</text>
</comment>
<comment type="subcellular location">
    <subcellularLocation>
        <location evidence="1">Virion</location>
    </subcellularLocation>
</comment>
<comment type="miscellaneous">
    <text>The gene encoding this protein is included within the N gene (alternative ORF).</text>
</comment>
<comment type="similarity">
    <text evidence="2">Belongs to the coronaviruses I protein family.</text>
</comment>
<comment type="sequence caution" evidence="2">
    <conflict type="miscellaneous discrepancy">
        <sequence resource="EMBL" id="X00990"/>
    </conflict>
    <text>The submitted sequence has a stop codon in position 17, but this could be due to a sequencing error or to the presence of quasispecies mutations.</text>
</comment>
<protein>
    <recommendedName>
        <fullName>Protein I</fullName>
    </recommendedName>
    <alternativeName>
        <fullName>N internal ORF protein</fullName>
        <shortName>IORF</shortName>
    </alternativeName>
    <alternativeName>
        <fullName>N2 protein</fullName>
    </alternativeName>
    <alternativeName>
        <fullName>Protein in nucleocapsid ORF</fullName>
    </alternativeName>
</protein>
<evidence type="ECO:0000250" key="1"/>
<evidence type="ECO:0000305" key="2"/>
<organism>
    <name type="scientific">Murine coronavirus (strain JHM)</name>
    <name type="common">MHV-JHM</name>
    <name type="synonym">Murine hepatitis virus</name>
    <dbReference type="NCBI Taxonomy" id="11144"/>
    <lineage>
        <taxon>Viruses</taxon>
        <taxon>Riboviria</taxon>
        <taxon>Orthornavirae</taxon>
        <taxon>Pisuviricota</taxon>
        <taxon>Pisoniviricetes</taxon>
        <taxon>Nidovirales</taxon>
        <taxon>Cornidovirineae</taxon>
        <taxon>Coronaviridae</taxon>
        <taxon>Orthocoronavirinae</taxon>
        <taxon>Betacoronavirus</taxon>
        <taxon>Embecovirus</taxon>
        <taxon>Murine coronavirus</taxon>
    </lineage>
</organism>
<sequence>MESSRRPLGLTKPSAGXIIKIEAERISPSRLQLLNPIPGVWFPITLGFRALPNSRREKSFSLHKDKECLLPMESQLHSKRDIGTDTTDVPLKHLMASRSSYCPDGIFTILEQGPMLAQSMATISKELSGSQANRPRLGPLPILLKGTQVAMRLFLLGLRPVRYCLKVFMLKAQEGLHLLVDLVRGHNPVGQIIALEAVPTSASLPLL</sequence>